<feature type="chain" id="PRO_1000164900" description="Cyclic pyranopterin monophosphate synthase">
    <location>
        <begin position="1"/>
        <end position="161"/>
    </location>
</feature>
<feature type="active site" evidence="1">
    <location>
        <position position="128"/>
    </location>
</feature>
<feature type="binding site" evidence="1">
    <location>
        <begin position="75"/>
        <end position="77"/>
    </location>
    <ligand>
        <name>substrate</name>
    </ligand>
</feature>
<feature type="binding site" evidence="1">
    <location>
        <begin position="113"/>
        <end position="114"/>
    </location>
    <ligand>
        <name>substrate</name>
    </ligand>
</feature>
<sequence length="161" mass="17443">MSQLTHINAAGEAHMVDVSAKAETVREARAEAFVTMRSETLAMIVDGKHHKGDVFATARIAGIQAAKRTWELIPLCHPLLLSKVEIQLQAEPEHNRVRIESLCRLTGKTGVEMEALTAASVAALTIYDMCKAVQKDMVIGPVRLLAKSGGKSGDFKVDAHD</sequence>
<comment type="function">
    <text evidence="1">Catalyzes the conversion of (8S)-3',8-cyclo-7,8-dihydroguanosine 5'-triphosphate to cyclic pyranopterin monophosphate (cPMP).</text>
</comment>
<comment type="catalytic activity">
    <reaction evidence="1">
        <text>(8S)-3',8-cyclo-7,8-dihydroguanosine 5'-triphosphate = cyclic pyranopterin phosphate + diphosphate</text>
        <dbReference type="Rhea" id="RHEA:49580"/>
        <dbReference type="ChEBI" id="CHEBI:33019"/>
        <dbReference type="ChEBI" id="CHEBI:59648"/>
        <dbReference type="ChEBI" id="CHEBI:131766"/>
        <dbReference type="EC" id="4.6.1.17"/>
    </reaction>
</comment>
<comment type="pathway">
    <text evidence="1">Cofactor biosynthesis; molybdopterin biosynthesis.</text>
</comment>
<comment type="subunit">
    <text evidence="1">Homohexamer; trimer of dimers.</text>
</comment>
<comment type="similarity">
    <text evidence="1">Belongs to the MoaC family.</text>
</comment>
<evidence type="ECO:0000255" key="1">
    <source>
        <dbReference type="HAMAP-Rule" id="MF_01224"/>
    </source>
</evidence>
<protein>
    <recommendedName>
        <fullName evidence="1">Cyclic pyranopterin monophosphate synthase</fullName>
        <ecNumber evidence="1">4.6.1.17</ecNumber>
    </recommendedName>
    <alternativeName>
        <fullName evidence="1">Molybdenum cofactor biosynthesis protein C</fullName>
    </alternativeName>
</protein>
<dbReference type="EC" id="4.6.1.17" evidence="1"/>
<dbReference type="EMBL" id="CP000857">
    <property type="protein sequence ID" value="ACN44974.1"/>
    <property type="molecule type" value="Genomic_DNA"/>
</dbReference>
<dbReference type="RefSeq" id="WP_000080894.1">
    <property type="nucleotide sequence ID" value="NC_012125.1"/>
</dbReference>
<dbReference type="SMR" id="C0PWZ2"/>
<dbReference type="KEGG" id="sei:SPC_0801"/>
<dbReference type="HOGENOM" id="CLU_074693_1_1_6"/>
<dbReference type="UniPathway" id="UPA00344"/>
<dbReference type="Proteomes" id="UP000001599">
    <property type="component" value="Chromosome"/>
</dbReference>
<dbReference type="GO" id="GO:0061799">
    <property type="term" value="F:cyclic pyranopterin monophosphate synthase activity"/>
    <property type="evidence" value="ECO:0007669"/>
    <property type="project" value="UniProtKB-UniRule"/>
</dbReference>
<dbReference type="GO" id="GO:0006777">
    <property type="term" value="P:Mo-molybdopterin cofactor biosynthetic process"/>
    <property type="evidence" value="ECO:0007669"/>
    <property type="project" value="UniProtKB-UniRule"/>
</dbReference>
<dbReference type="CDD" id="cd01420">
    <property type="entry name" value="MoaC_PE"/>
    <property type="match status" value="1"/>
</dbReference>
<dbReference type="FunFam" id="3.30.70.640:FF:000001">
    <property type="entry name" value="Cyclic pyranopterin monophosphate synthase"/>
    <property type="match status" value="1"/>
</dbReference>
<dbReference type="Gene3D" id="3.30.70.640">
    <property type="entry name" value="Molybdopterin cofactor biosynthesis C (MoaC) domain"/>
    <property type="match status" value="1"/>
</dbReference>
<dbReference type="HAMAP" id="MF_01224_B">
    <property type="entry name" value="MoaC_B"/>
    <property type="match status" value="1"/>
</dbReference>
<dbReference type="InterPro" id="IPR023045">
    <property type="entry name" value="MoaC"/>
</dbReference>
<dbReference type="InterPro" id="IPR047594">
    <property type="entry name" value="MoaC_bact/euk"/>
</dbReference>
<dbReference type="InterPro" id="IPR036522">
    <property type="entry name" value="MoaC_sf"/>
</dbReference>
<dbReference type="InterPro" id="IPR050105">
    <property type="entry name" value="MoCo_biosynth_MoaA/MoaC"/>
</dbReference>
<dbReference type="InterPro" id="IPR002820">
    <property type="entry name" value="Mopterin_CF_biosynth-C_dom"/>
</dbReference>
<dbReference type="NCBIfam" id="TIGR00581">
    <property type="entry name" value="moaC"/>
    <property type="match status" value="1"/>
</dbReference>
<dbReference type="NCBIfam" id="NF006870">
    <property type="entry name" value="PRK09364.1"/>
    <property type="match status" value="1"/>
</dbReference>
<dbReference type="PANTHER" id="PTHR22960">
    <property type="entry name" value="MOLYBDOPTERIN COFACTOR SYNTHESIS PROTEIN A"/>
    <property type="match status" value="1"/>
</dbReference>
<dbReference type="Pfam" id="PF01967">
    <property type="entry name" value="MoaC"/>
    <property type="match status" value="1"/>
</dbReference>
<dbReference type="SUPFAM" id="SSF55040">
    <property type="entry name" value="Molybdenum cofactor biosynthesis protein C, MoaC"/>
    <property type="match status" value="1"/>
</dbReference>
<accession>C0PWZ2</accession>
<proteinExistence type="inferred from homology"/>
<organism>
    <name type="scientific">Salmonella paratyphi C (strain RKS4594)</name>
    <dbReference type="NCBI Taxonomy" id="476213"/>
    <lineage>
        <taxon>Bacteria</taxon>
        <taxon>Pseudomonadati</taxon>
        <taxon>Pseudomonadota</taxon>
        <taxon>Gammaproteobacteria</taxon>
        <taxon>Enterobacterales</taxon>
        <taxon>Enterobacteriaceae</taxon>
        <taxon>Salmonella</taxon>
    </lineage>
</organism>
<keyword id="KW-0456">Lyase</keyword>
<keyword id="KW-0501">Molybdenum cofactor biosynthesis</keyword>
<name>MOAC_SALPC</name>
<gene>
    <name evidence="1" type="primary">moaC</name>
    <name type="ordered locus">SPC_0801</name>
</gene>
<reference key="1">
    <citation type="journal article" date="2009" name="PLoS ONE">
        <title>Salmonella paratyphi C: genetic divergence from Salmonella choleraesuis and pathogenic convergence with Salmonella typhi.</title>
        <authorList>
            <person name="Liu W.-Q."/>
            <person name="Feng Y."/>
            <person name="Wang Y."/>
            <person name="Zou Q.-H."/>
            <person name="Chen F."/>
            <person name="Guo J.-T."/>
            <person name="Peng Y.-H."/>
            <person name="Jin Y."/>
            <person name="Li Y.-G."/>
            <person name="Hu S.-N."/>
            <person name="Johnston R.N."/>
            <person name="Liu G.-R."/>
            <person name="Liu S.-L."/>
        </authorList>
    </citation>
    <scope>NUCLEOTIDE SEQUENCE [LARGE SCALE GENOMIC DNA]</scope>
    <source>
        <strain>RKS4594</strain>
    </source>
</reference>